<accession>O26860</accession>
<evidence type="ECO:0000255" key="1">
    <source>
        <dbReference type="HAMAP-Rule" id="MF_00210"/>
    </source>
</evidence>
<evidence type="ECO:0000305" key="2"/>
<reference key="1">
    <citation type="journal article" date="1997" name="J. Bacteriol.">
        <title>Complete genome sequence of Methanobacterium thermoautotrophicum deltaH: functional analysis and comparative genomics.</title>
        <authorList>
            <person name="Smith D.R."/>
            <person name="Doucette-Stamm L.A."/>
            <person name="Deloughery C."/>
            <person name="Lee H.-M."/>
            <person name="Dubois J."/>
            <person name="Aldredge T."/>
            <person name="Bashirzadeh R."/>
            <person name="Blakely D."/>
            <person name="Cook R."/>
            <person name="Gilbert K."/>
            <person name="Harrison D."/>
            <person name="Hoang L."/>
            <person name="Keagle P."/>
            <person name="Lumm W."/>
            <person name="Pothier B."/>
            <person name="Qiu D."/>
            <person name="Spadafora R."/>
            <person name="Vicare R."/>
            <person name="Wang Y."/>
            <person name="Wierzbowski J."/>
            <person name="Gibson R."/>
            <person name="Jiwani N."/>
            <person name="Caruso A."/>
            <person name="Bush D."/>
            <person name="Safer H."/>
            <person name="Patwell D."/>
            <person name="Prabhakar S."/>
            <person name="McDougall S."/>
            <person name="Shimer G."/>
            <person name="Goyal A."/>
            <person name="Pietrovski S."/>
            <person name="Church G.M."/>
            <person name="Daniels C.J."/>
            <person name="Mao J.-I."/>
            <person name="Rice P."/>
            <person name="Noelling J."/>
            <person name="Reeve J.N."/>
        </authorList>
    </citation>
    <scope>NUCLEOTIDE SEQUENCE [LARGE SCALE GENOMIC DNA]</scope>
    <source>
        <strain>ATCC 29096 / DSM 1053 / JCM 10044 / NBRC 100330 / Delta H</strain>
    </source>
</reference>
<feature type="chain" id="PRO_0000088332" description="3-phosphoshikimate 1-carboxyvinyltransferase">
    <location>
        <begin position="1"/>
        <end position="419"/>
    </location>
</feature>
<feature type="active site" description="Proton acceptor" evidence="1">
    <location>
        <position position="305"/>
    </location>
</feature>
<feature type="binding site" evidence="1">
    <location>
        <position position="21"/>
    </location>
    <ligand>
        <name>3-phosphoshikimate</name>
        <dbReference type="ChEBI" id="CHEBI:145989"/>
    </ligand>
</feature>
<feature type="binding site" evidence="1">
    <location>
        <position position="21"/>
    </location>
    <ligand>
        <name>phosphoenolpyruvate</name>
        <dbReference type="ChEBI" id="CHEBI:58702"/>
    </ligand>
</feature>
<feature type="binding site" evidence="1">
    <location>
        <position position="22"/>
    </location>
    <ligand>
        <name>3-phosphoshikimate</name>
        <dbReference type="ChEBI" id="CHEBI:145989"/>
    </ligand>
</feature>
<feature type="binding site" evidence="1">
    <location>
        <position position="26"/>
    </location>
    <ligand>
        <name>3-phosphoshikimate</name>
        <dbReference type="ChEBI" id="CHEBI:145989"/>
    </ligand>
</feature>
<feature type="binding site" evidence="1">
    <location>
        <position position="91"/>
    </location>
    <ligand>
        <name>phosphoenolpyruvate</name>
        <dbReference type="ChEBI" id="CHEBI:58702"/>
    </ligand>
</feature>
<feature type="binding site" evidence="1">
    <location>
        <position position="119"/>
    </location>
    <ligand>
        <name>phosphoenolpyruvate</name>
        <dbReference type="ChEBI" id="CHEBI:58702"/>
    </ligand>
</feature>
<feature type="binding site" evidence="1">
    <location>
        <position position="164"/>
    </location>
    <ligand>
        <name>3-phosphoshikimate</name>
        <dbReference type="ChEBI" id="CHEBI:145989"/>
    </ligand>
</feature>
<feature type="binding site" evidence="1">
    <location>
        <position position="165"/>
    </location>
    <ligand>
        <name>3-phosphoshikimate</name>
        <dbReference type="ChEBI" id="CHEBI:145989"/>
    </ligand>
</feature>
<feature type="binding site" evidence="1">
    <location>
        <position position="166"/>
    </location>
    <ligand>
        <name>3-phosphoshikimate</name>
        <dbReference type="ChEBI" id="CHEBI:145989"/>
    </ligand>
</feature>
<feature type="binding site" evidence="1">
    <location>
        <position position="166"/>
    </location>
    <ligand>
        <name>phosphoenolpyruvate</name>
        <dbReference type="ChEBI" id="CHEBI:58702"/>
    </ligand>
</feature>
<feature type="binding site" evidence="1">
    <location>
        <position position="191"/>
    </location>
    <ligand>
        <name>3-phosphoshikimate</name>
        <dbReference type="ChEBI" id="CHEBI:145989"/>
    </ligand>
</feature>
<feature type="binding site" evidence="1">
    <location>
        <position position="305"/>
    </location>
    <ligand>
        <name>3-phosphoshikimate</name>
        <dbReference type="ChEBI" id="CHEBI:145989"/>
    </ligand>
</feature>
<feature type="binding site" evidence="1">
    <location>
        <position position="332"/>
    </location>
    <ligand>
        <name>3-phosphoshikimate</name>
        <dbReference type="ChEBI" id="CHEBI:145989"/>
    </ligand>
</feature>
<feature type="binding site" evidence="1">
    <location>
        <position position="336"/>
    </location>
    <ligand>
        <name>phosphoenolpyruvate</name>
        <dbReference type="ChEBI" id="CHEBI:58702"/>
    </ligand>
</feature>
<feature type="binding site" evidence="1">
    <location>
        <position position="376"/>
    </location>
    <ligand>
        <name>phosphoenolpyruvate</name>
        <dbReference type="ChEBI" id="CHEBI:58702"/>
    </ligand>
</feature>
<organism>
    <name type="scientific">Methanothermobacter thermautotrophicus (strain ATCC 29096 / DSM 1053 / JCM 10044 / NBRC 100330 / Delta H)</name>
    <name type="common">Methanobacterium thermoautotrophicum</name>
    <dbReference type="NCBI Taxonomy" id="187420"/>
    <lineage>
        <taxon>Archaea</taxon>
        <taxon>Methanobacteriati</taxon>
        <taxon>Methanobacteriota</taxon>
        <taxon>Methanomada group</taxon>
        <taxon>Methanobacteria</taxon>
        <taxon>Methanobacteriales</taxon>
        <taxon>Methanobacteriaceae</taxon>
        <taxon>Methanothermobacter</taxon>
    </lineage>
</organism>
<protein>
    <recommendedName>
        <fullName evidence="1">3-phosphoshikimate 1-carboxyvinyltransferase</fullName>
        <ecNumber evidence="1">2.5.1.19</ecNumber>
    </recommendedName>
    <alternativeName>
        <fullName evidence="1">5-enolpyruvylshikimate-3-phosphate synthase</fullName>
        <shortName evidence="1">EPSP synthase</shortName>
        <shortName evidence="1">EPSPS</shortName>
    </alternativeName>
</protein>
<name>AROA_METTH</name>
<dbReference type="EC" id="2.5.1.19" evidence="1"/>
<dbReference type="EMBL" id="AE000666">
    <property type="protein sequence ID" value="AAB85269.1"/>
    <property type="molecule type" value="Genomic_DNA"/>
</dbReference>
<dbReference type="PIR" id="D69202">
    <property type="entry name" value="D69202"/>
</dbReference>
<dbReference type="RefSeq" id="WP_010876404.1">
    <property type="nucleotide sequence ID" value="NC_000916.1"/>
</dbReference>
<dbReference type="SMR" id="O26860"/>
<dbReference type="FunCoup" id="O26860">
    <property type="interactions" value="129"/>
</dbReference>
<dbReference type="STRING" id="187420.MTH_766"/>
<dbReference type="PaxDb" id="187420-MTH_766"/>
<dbReference type="EnsemblBacteria" id="AAB85269">
    <property type="protein sequence ID" value="AAB85269"/>
    <property type="gene ID" value="MTH_766"/>
</dbReference>
<dbReference type="GeneID" id="82297218"/>
<dbReference type="KEGG" id="mth:MTH_766"/>
<dbReference type="PATRIC" id="fig|187420.15.peg.754"/>
<dbReference type="HOGENOM" id="CLU_024321_0_0_2"/>
<dbReference type="InParanoid" id="O26860"/>
<dbReference type="UniPathway" id="UPA00053"/>
<dbReference type="Proteomes" id="UP000005223">
    <property type="component" value="Chromosome"/>
</dbReference>
<dbReference type="GO" id="GO:0005737">
    <property type="term" value="C:cytoplasm"/>
    <property type="evidence" value="ECO:0007669"/>
    <property type="project" value="UniProtKB-SubCell"/>
</dbReference>
<dbReference type="GO" id="GO:0003866">
    <property type="term" value="F:3-phosphoshikimate 1-carboxyvinyltransferase activity"/>
    <property type="evidence" value="ECO:0007669"/>
    <property type="project" value="UniProtKB-UniRule"/>
</dbReference>
<dbReference type="GO" id="GO:0008652">
    <property type="term" value="P:amino acid biosynthetic process"/>
    <property type="evidence" value="ECO:0007669"/>
    <property type="project" value="UniProtKB-KW"/>
</dbReference>
<dbReference type="GO" id="GO:0009073">
    <property type="term" value="P:aromatic amino acid family biosynthetic process"/>
    <property type="evidence" value="ECO:0007669"/>
    <property type="project" value="UniProtKB-KW"/>
</dbReference>
<dbReference type="GO" id="GO:0009423">
    <property type="term" value="P:chorismate biosynthetic process"/>
    <property type="evidence" value="ECO:0007669"/>
    <property type="project" value="UniProtKB-UniRule"/>
</dbReference>
<dbReference type="CDD" id="cd01556">
    <property type="entry name" value="EPSP_synthase"/>
    <property type="match status" value="1"/>
</dbReference>
<dbReference type="Gene3D" id="3.65.10.10">
    <property type="entry name" value="Enolpyruvate transferase domain"/>
    <property type="match status" value="2"/>
</dbReference>
<dbReference type="HAMAP" id="MF_00210">
    <property type="entry name" value="EPSP_synth"/>
    <property type="match status" value="1"/>
</dbReference>
<dbReference type="InterPro" id="IPR001986">
    <property type="entry name" value="Enolpyruvate_Tfrase_dom"/>
</dbReference>
<dbReference type="InterPro" id="IPR036968">
    <property type="entry name" value="Enolpyruvate_Tfrase_sf"/>
</dbReference>
<dbReference type="InterPro" id="IPR006264">
    <property type="entry name" value="EPSP_synthase"/>
</dbReference>
<dbReference type="InterPro" id="IPR023193">
    <property type="entry name" value="EPSP_synthase_CS"/>
</dbReference>
<dbReference type="InterPro" id="IPR013792">
    <property type="entry name" value="RNA3'P_cycl/enolpyr_Trfase_a/b"/>
</dbReference>
<dbReference type="NCBIfam" id="TIGR01356">
    <property type="entry name" value="aroA"/>
    <property type="match status" value="1"/>
</dbReference>
<dbReference type="PANTHER" id="PTHR21090">
    <property type="entry name" value="AROM/DEHYDROQUINATE SYNTHASE"/>
    <property type="match status" value="1"/>
</dbReference>
<dbReference type="PANTHER" id="PTHR21090:SF5">
    <property type="entry name" value="PENTAFUNCTIONAL AROM POLYPEPTIDE"/>
    <property type="match status" value="1"/>
</dbReference>
<dbReference type="Pfam" id="PF00275">
    <property type="entry name" value="EPSP_synthase"/>
    <property type="match status" value="1"/>
</dbReference>
<dbReference type="PIRSF" id="PIRSF000505">
    <property type="entry name" value="EPSPS"/>
    <property type="match status" value="1"/>
</dbReference>
<dbReference type="SUPFAM" id="SSF55205">
    <property type="entry name" value="EPT/RTPC-like"/>
    <property type="match status" value="1"/>
</dbReference>
<dbReference type="PROSITE" id="PS00104">
    <property type="entry name" value="EPSP_SYNTHASE_1"/>
    <property type="match status" value="1"/>
</dbReference>
<dbReference type="PROSITE" id="PS00885">
    <property type="entry name" value="EPSP_SYNTHASE_2"/>
    <property type="match status" value="1"/>
</dbReference>
<comment type="function">
    <text evidence="1">Catalyzes the transfer of the enolpyruvyl moiety of phosphoenolpyruvate (PEP) to the 5-hydroxyl of shikimate-3-phosphate (S3P) to produce enolpyruvyl shikimate-3-phosphate and inorganic phosphate.</text>
</comment>
<comment type="catalytic activity">
    <reaction evidence="1">
        <text>3-phosphoshikimate + phosphoenolpyruvate = 5-O-(1-carboxyvinyl)-3-phosphoshikimate + phosphate</text>
        <dbReference type="Rhea" id="RHEA:21256"/>
        <dbReference type="ChEBI" id="CHEBI:43474"/>
        <dbReference type="ChEBI" id="CHEBI:57701"/>
        <dbReference type="ChEBI" id="CHEBI:58702"/>
        <dbReference type="ChEBI" id="CHEBI:145989"/>
        <dbReference type="EC" id="2.5.1.19"/>
    </reaction>
    <physiologicalReaction direction="left-to-right" evidence="1">
        <dbReference type="Rhea" id="RHEA:21257"/>
    </physiologicalReaction>
</comment>
<comment type="pathway">
    <text evidence="1">Metabolic intermediate biosynthesis; chorismate biosynthesis.</text>
</comment>
<comment type="subunit">
    <text evidence="1">Monomer.</text>
</comment>
<comment type="subcellular location">
    <subcellularLocation>
        <location evidence="1">Cytoplasm</location>
    </subcellularLocation>
</comment>
<comment type="similarity">
    <text evidence="1 2">Belongs to the EPSP synthase family.</text>
</comment>
<gene>
    <name evidence="1" type="primary">aroA</name>
    <name type="ordered locus">MTH_766</name>
</gene>
<proteinExistence type="inferred from homology"/>
<sequence>MDLTVEKSGNLEGTVKAPPSKSYTHRAVIIAALAEGVSEIRDPLIAEDTLSSLNACRAFGIRVDEGDAWTVHGSGGELETPDDVIYLGNSGTTLRLMTSVAGLAENYTVLTGDESLRTRPMQPLLDALRPLGVEALSSRMNGLPPIIVRGGLRGGSTSIRGDVSSQFISSILIAAPLTEGVEVMVEGDFISRPYVDMTVDVMERFSVPVDYSEGTFRVEPAVYRGLDYTVEGDYSSASYLAGAVAAAGGDVLIENLFRDSRQGDRIILDIISDMGAEVRRGEDHVRIASTGELSGVSVNLHDAPDLLPTVAVLGALATGRTEIGGVEHARYKETDRISTCAAELRRLGVDVTELPDGMIIEGGASGGTVWSHGDHRLAMAFTLIGLREGITIRDAEVFSVSFPDFPERMMQIGCRMNLS</sequence>
<keyword id="KW-0028">Amino-acid biosynthesis</keyword>
<keyword id="KW-0057">Aromatic amino acid biosynthesis</keyword>
<keyword id="KW-0963">Cytoplasm</keyword>
<keyword id="KW-1185">Reference proteome</keyword>
<keyword id="KW-0808">Transferase</keyword>